<keyword id="KW-0064">Aspartyl protease</keyword>
<keyword id="KW-0997">Cell inner membrane</keyword>
<keyword id="KW-1003">Cell membrane</keyword>
<keyword id="KW-0378">Hydrolase</keyword>
<keyword id="KW-0472">Membrane</keyword>
<keyword id="KW-0645">Protease</keyword>
<keyword id="KW-0812">Transmembrane</keyword>
<keyword id="KW-1133">Transmembrane helix</keyword>
<gene>
    <name evidence="1" type="primary">lspA</name>
    <name type="ordered locus">CAB205</name>
</gene>
<protein>
    <recommendedName>
        <fullName evidence="1">Lipoprotein signal peptidase</fullName>
        <ecNumber evidence="1">3.4.23.36</ecNumber>
    </recommendedName>
    <alternativeName>
        <fullName evidence="1">Prolipoprotein signal peptidase</fullName>
    </alternativeName>
    <alternativeName>
        <fullName evidence="1">Signal peptidase II</fullName>
        <shortName evidence="1">SPase II</shortName>
    </alternativeName>
</protein>
<evidence type="ECO:0000255" key="1">
    <source>
        <dbReference type="HAMAP-Rule" id="MF_00161"/>
    </source>
</evidence>
<organism>
    <name type="scientific">Chlamydia abortus (strain DSM 27085 / S26/3)</name>
    <name type="common">Chlamydophila abortus</name>
    <dbReference type="NCBI Taxonomy" id="218497"/>
    <lineage>
        <taxon>Bacteria</taxon>
        <taxon>Pseudomonadati</taxon>
        <taxon>Chlamydiota</taxon>
        <taxon>Chlamydiia</taxon>
        <taxon>Chlamydiales</taxon>
        <taxon>Chlamydiaceae</taxon>
        <taxon>Chlamydia/Chlamydophila group</taxon>
        <taxon>Chlamydia</taxon>
    </lineage>
</organism>
<comment type="function">
    <text evidence="1">This protein specifically catalyzes the removal of signal peptides from prolipoproteins.</text>
</comment>
<comment type="catalytic activity">
    <reaction evidence="1">
        <text>Release of signal peptides from bacterial membrane prolipoproteins. Hydrolyzes -Xaa-Yaa-Zaa-|-(S,diacylglyceryl)Cys-, in which Xaa is hydrophobic (preferably Leu), and Yaa (Ala or Ser) and Zaa (Gly or Ala) have small, neutral side chains.</text>
        <dbReference type="EC" id="3.4.23.36"/>
    </reaction>
</comment>
<comment type="pathway">
    <text evidence="1">Protein modification; lipoprotein biosynthesis (signal peptide cleavage).</text>
</comment>
<comment type="subcellular location">
    <subcellularLocation>
        <location evidence="1">Cell inner membrane</location>
        <topology evidence="1">Multi-pass membrane protein</topology>
    </subcellularLocation>
</comment>
<comment type="similarity">
    <text evidence="1">Belongs to the peptidase A8 family.</text>
</comment>
<sequence length="165" mass="19000">MSSRSRSTFLAIACFVLIDWVTKLAVLLYLGNLPDANPILYQYSWGKLLFCICPTFNEGAAFGLFAKYKYFLFFIRITIILGILAFLFLRKKTSSPAIRFSLILLCSGAIGNVGDIVFYRHVVDFISIGYKRWFFPTFNFADIFISLGTLIFIYKLYFPTKQKIK</sequence>
<proteinExistence type="inferred from homology"/>
<feature type="chain" id="PRO_0000289363" description="Lipoprotein signal peptidase">
    <location>
        <begin position="1"/>
        <end position="165"/>
    </location>
</feature>
<feature type="transmembrane region" description="Helical" evidence="1">
    <location>
        <begin position="9"/>
        <end position="29"/>
    </location>
</feature>
<feature type="transmembrane region" description="Helical" evidence="1">
    <location>
        <begin position="69"/>
        <end position="89"/>
    </location>
</feature>
<feature type="transmembrane region" description="Helical" evidence="1">
    <location>
        <begin position="98"/>
        <end position="118"/>
    </location>
</feature>
<feature type="transmembrane region" description="Helical" evidence="1">
    <location>
        <begin position="133"/>
        <end position="153"/>
    </location>
</feature>
<feature type="active site" evidence="1">
    <location>
        <position position="124"/>
    </location>
</feature>
<feature type="active site" evidence="1">
    <location>
        <position position="142"/>
    </location>
</feature>
<dbReference type="EC" id="3.4.23.36" evidence="1"/>
<dbReference type="EMBL" id="CR848038">
    <property type="protein sequence ID" value="CAH63663.1"/>
    <property type="molecule type" value="Genomic_DNA"/>
</dbReference>
<dbReference type="RefSeq" id="WP_011096898.1">
    <property type="nucleotide sequence ID" value="NC_004552.2"/>
</dbReference>
<dbReference type="SMR" id="Q5L6Q8"/>
<dbReference type="GeneID" id="93024764"/>
<dbReference type="KEGG" id="cab:CAB205"/>
<dbReference type="eggNOG" id="COG0597">
    <property type="taxonomic scope" value="Bacteria"/>
</dbReference>
<dbReference type="HOGENOM" id="CLU_083252_3_0_0"/>
<dbReference type="OrthoDB" id="9810259at2"/>
<dbReference type="UniPathway" id="UPA00665"/>
<dbReference type="Proteomes" id="UP000001012">
    <property type="component" value="Chromosome"/>
</dbReference>
<dbReference type="GO" id="GO:0005886">
    <property type="term" value="C:plasma membrane"/>
    <property type="evidence" value="ECO:0007669"/>
    <property type="project" value="UniProtKB-SubCell"/>
</dbReference>
<dbReference type="GO" id="GO:0004190">
    <property type="term" value="F:aspartic-type endopeptidase activity"/>
    <property type="evidence" value="ECO:0007669"/>
    <property type="project" value="UniProtKB-UniRule"/>
</dbReference>
<dbReference type="GO" id="GO:0006508">
    <property type="term" value="P:proteolysis"/>
    <property type="evidence" value="ECO:0007669"/>
    <property type="project" value="UniProtKB-KW"/>
</dbReference>
<dbReference type="HAMAP" id="MF_00161">
    <property type="entry name" value="LspA"/>
    <property type="match status" value="1"/>
</dbReference>
<dbReference type="InterPro" id="IPR001872">
    <property type="entry name" value="Peptidase_A8"/>
</dbReference>
<dbReference type="NCBIfam" id="TIGR00077">
    <property type="entry name" value="lspA"/>
    <property type="match status" value="1"/>
</dbReference>
<dbReference type="PANTHER" id="PTHR33695">
    <property type="entry name" value="LIPOPROTEIN SIGNAL PEPTIDASE"/>
    <property type="match status" value="1"/>
</dbReference>
<dbReference type="PANTHER" id="PTHR33695:SF1">
    <property type="entry name" value="LIPOPROTEIN SIGNAL PEPTIDASE"/>
    <property type="match status" value="1"/>
</dbReference>
<dbReference type="Pfam" id="PF01252">
    <property type="entry name" value="Peptidase_A8"/>
    <property type="match status" value="1"/>
</dbReference>
<dbReference type="PRINTS" id="PR00781">
    <property type="entry name" value="LIPOSIGPTASE"/>
</dbReference>
<dbReference type="PROSITE" id="PS00855">
    <property type="entry name" value="SPASE_II"/>
    <property type="match status" value="1"/>
</dbReference>
<name>LSPA_CHLAB</name>
<reference key="1">
    <citation type="journal article" date="2005" name="Genome Res.">
        <title>The Chlamydophila abortus genome sequence reveals an array of variable proteins that contribute to interspecies variation.</title>
        <authorList>
            <person name="Thomson N.R."/>
            <person name="Yeats C."/>
            <person name="Bell K."/>
            <person name="Holden M.T.G."/>
            <person name="Bentley S.D."/>
            <person name="Livingstone M."/>
            <person name="Cerdeno-Tarraga A.-M."/>
            <person name="Harris B."/>
            <person name="Doggett J."/>
            <person name="Ormond D."/>
            <person name="Mungall K."/>
            <person name="Clarke K."/>
            <person name="Feltwell T."/>
            <person name="Hance Z."/>
            <person name="Sanders M."/>
            <person name="Quail M.A."/>
            <person name="Price C."/>
            <person name="Barrell B.G."/>
            <person name="Parkhill J."/>
            <person name="Longbottom D."/>
        </authorList>
    </citation>
    <scope>NUCLEOTIDE SEQUENCE [LARGE SCALE GENOMIC DNA]</scope>
    <source>
        <strain>DSM 27085 / S26/3</strain>
    </source>
</reference>
<accession>Q5L6Q8</accession>